<feature type="signal peptide" evidence="2">
    <location>
        <begin position="1"/>
        <end position="28"/>
    </location>
</feature>
<feature type="chain" id="PRO_0000274619" description="Serine carboxypeptidase-like 5">
    <location>
        <begin position="29"/>
        <end position="438"/>
    </location>
</feature>
<feature type="active site" evidence="1">
    <location>
        <position position="183"/>
    </location>
</feature>
<feature type="active site" evidence="1">
    <location>
        <position position="363"/>
    </location>
</feature>
<feature type="active site" evidence="1">
    <location>
        <position position="416"/>
    </location>
</feature>
<feature type="glycosylation site" description="N-linked (GlcNAc...) asparagine" evidence="2">
    <location>
        <position position="108"/>
    </location>
</feature>
<feature type="glycosylation site" description="N-linked (GlcNAc...) asparagine" evidence="2">
    <location>
        <position position="347"/>
    </location>
</feature>
<feature type="glycosylation site" description="N-linked (GlcNAc...) asparagine" evidence="2">
    <location>
        <position position="379"/>
    </location>
</feature>
<feature type="disulfide bond" evidence="1">
    <location>
        <begin position="87"/>
        <end position="328"/>
    </location>
</feature>
<feature type="disulfide bond" evidence="1">
    <location>
        <begin position="251"/>
        <end position="263"/>
    </location>
</feature>
<feature type="disulfide bond" evidence="1">
    <location>
        <begin position="287"/>
        <end position="294"/>
    </location>
</feature>
<name>SCP5_ARATH</name>
<evidence type="ECO:0000250" key="1"/>
<evidence type="ECO:0000255" key="2"/>
<evidence type="ECO:0000269" key="3">
    <source>
    </source>
</evidence>
<evidence type="ECO:0000305" key="4"/>
<keyword id="KW-0121">Carboxypeptidase</keyword>
<keyword id="KW-1015">Disulfide bond</keyword>
<keyword id="KW-0325">Glycoprotein</keyword>
<keyword id="KW-0378">Hydrolase</keyword>
<keyword id="KW-0645">Protease</keyword>
<keyword id="KW-1185">Reference proteome</keyword>
<keyword id="KW-0964">Secreted</keyword>
<keyword id="KW-0732">Signal</keyword>
<accession>Q9CAU2</accession>
<accession>F4HQ63</accession>
<dbReference type="EC" id="3.4.16.-"/>
<dbReference type="EMBL" id="AC010556">
    <property type="protein sequence ID" value="AAG52136.1"/>
    <property type="status" value="ALT_SEQ"/>
    <property type="molecule type" value="Genomic_DNA"/>
</dbReference>
<dbReference type="EMBL" id="CP002684">
    <property type="protein sequence ID" value="AEE35438.2"/>
    <property type="molecule type" value="Genomic_DNA"/>
</dbReference>
<dbReference type="PIR" id="B96759">
    <property type="entry name" value="B96759"/>
</dbReference>
<dbReference type="RefSeq" id="NP_001319372.1">
    <property type="nucleotide sequence ID" value="NM_001334580.1"/>
</dbReference>
<dbReference type="SMR" id="Q9CAU2"/>
<dbReference type="FunCoup" id="Q9CAU2">
    <property type="interactions" value="1018"/>
</dbReference>
<dbReference type="STRING" id="3702.Q9CAU2"/>
<dbReference type="ESTHER" id="arath-SCP5">
    <property type="family name" value="Carboxypeptidase_S10"/>
</dbReference>
<dbReference type="MEROPS" id="S10.A03"/>
<dbReference type="GlyCosmos" id="Q9CAU2">
    <property type="glycosylation" value="3 sites, No reported glycans"/>
</dbReference>
<dbReference type="GlyGen" id="Q9CAU2">
    <property type="glycosylation" value="3 sites"/>
</dbReference>
<dbReference type="PaxDb" id="3702-AT1G73290.1"/>
<dbReference type="ProteomicsDB" id="226607"/>
<dbReference type="EnsemblPlants" id="AT1G73290.1">
    <property type="protein sequence ID" value="AT1G73290.1"/>
    <property type="gene ID" value="AT1G73290"/>
</dbReference>
<dbReference type="GeneID" id="843663"/>
<dbReference type="Gramene" id="AT1G73290.1">
    <property type="protein sequence ID" value="AT1G73290.1"/>
    <property type="gene ID" value="AT1G73290"/>
</dbReference>
<dbReference type="KEGG" id="ath:AT1G73290"/>
<dbReference type="Araport" id="AT1G73290"/>
<dbReference type="TAIR" id="AT1G73290">
    <property type="gene designation" value="SCPL5"/>
</dbReference>
<dbReference type="eggNOG" id="KOG1282">
    <property type="taxonomic scope" value="Eukaryota"/>
</dbReference>
<dbReference type="HOGENOM" id="CLU_008523_0_1_1"/>
<dbReference type="InParanoid" id="Q9CAU2"/>
<dbReference type="OMA" id="HRWINGQ"/>
<dbReference type="PhylomeDB" id="Q9CAU2"/>
<dbReference type="BioCyc" id="ARA:AT1G73290-MONOMER"/>
<dbReference type="PRO" id="PR:Q9CAU2"/>
<dbReference type="Proteomes" id="UP000006548">
    <property type="component" value="Chromosome 1"/>
</dbReference>
<dbReference type="ExpressionAtlas" id="Q9CAU2">
    <property type="expression patterns" value="baseline and differential"/>
</dbReference>
<dbReference type="GO" id="GO:0005576">
    <property type="term" value="C:extracellular region"/>
    <property type="evidence" value="ECO:0007669"/>
    <property type="project" value="UniProtKB-SubCell"/>
</dbReference>
<dbReference type="GO" id="GO:0004185">
    <property type="term" value="F:serine-type carboxypeptidase activity"/>
    <property type="evidence" value="ECO:0007669"/>
    <property type="project" value="InterPro"/>
</dbReference>
<dbReference type="GO" id="GO:0006508">
    <property type="term" value="P:proteolysis"/>
    <property type="evidence" value="ECO:0007669"/>
    <property type="project" value="UniProtKB-KW"/>
</dbReference>
<dbReference type="FunFam" id="3.40.50.1820:FF:000148">
    <property type="entry name" value="Serine carboxypeptidase-like 11"/>
    <property type="match status" value="1"/>
</dbReference>
<dbReference type="Gene3D" id="3.40.50.1820">
    <property type="entry name" value="alpha/beta hydrolase"/>
    <property type="match status" value="1"/>
</dbReference>
<dbReference type="InterPro" id="IPR029058">
    <property type="entry name" value="AB_hydrolase_fold"/>
</dbReference>
<dbReference type="InterPro" id="IPR001563">
    <property type="entry name" value="Peptidase_S10"/>
</dbReference>
<dbReference type="PANTHER" id="PTHR11802:SF457">
    <property type="entry name" value="SERINE CARBOXYPEPTIDASE-LIKE 1-RELATED"/>
    <property type="match status" value="1"/>
</dbReference>
<dbReference type="PANTHER" id="PTHR11802">
    <property type="entry name" value="SERINE PROTEASE FAMILY S10 SERINE CARBOXYPEPTIDASE"/>
    <property type="match status" value="1"/>
</dbReference>
<dbReference type="Pfam" id="PF00450">
    <property type="entry name" value="Peptidase_S10"/>
    <property type="match status" value="1"/>
</dbReference>
<dbReference type="PRINTS" id="PR00724">
    <property type="entry name" value="CRBOXYPTASEC"/>
</dbReference>
<dbReference type="SUPFAM" id="SSF53474">
    <property type="entry name" value="alpha/beta-Hydrolases"/>
    <property type="match status" value="1"/>
</dbReference>
<organism>
    <name type="scientific">Arabidopsis thaliana</name>
    <name type="common">Mouse-ear cress</name>
    <dbReference type="NCBI Taxonomy" id="3702"/>
    <lineage>
        <taxon>Eukaryota</taxon>
        <taxon>Viridiplantae</taxon>
        <taxon>Streptophyta</taxon>
        <taxon>Embryophyta</taxon>
        <taxon>Tracheophyta</taxon>
        <taxon>Spermatophyta</taxon>
        <taxon>Magnoliopsida</taxon>
        <taxon>eudicotyledons</taxon>
        <taxon>Gunneridae</taxon>
        <taxon>Pentapetalae</taxon>
        <taxon>rosids</taxon>
        <taxon>malvids</taxon>
        <taxon>Brassicales</taxon>
        <taxon>Brassicaceae</taxon>
        <taxon>Camelineae</taxon>
        <taxon>Arabidopsis</taxon>
    </lineage>
</organism>
<comment type="function">
    <text evidence="1">Probable carboxypeptidase.</text>
</comment>
<comment type="subcellular location">
    <subcellularLocation>
        <location evidence="4">Secreted</location>
    </subcellularLocation>
</comment>
<comment type="tissue specificity">
    <text evidence="3">Expressed in seedlings, roots, and siliques.</text>
</comment>
<comment type="similarity">
    <text evidence="4">Belongs to the peptidase S10 family.</text>
</comment>
<comment type="sequence caution" evidence="4">
    <conflict type="erroneous gene model prediction">
        <sequence resource="EMBL-CDS" id="AAG52136"/>
    </conflict>
</comment>
<proteinExistence type="evidence at transcript level"/>
<protein>
    <recommendedName>
        <fullName>Serine carboxypeptidase-like 5</fullName>
        <ecNumber>3.4.16.-</ecNumber>
    </recommendedName>
</protein>
<reference key="1">
    <citation type="journal article" date="2000" name="Nature">
        <title>Sequence and analysis of chromosome 1 of the plant Arabidopsis thaliana.</title>
        <authorList>
            <person name="Theologis A."/>
            <person name="Ecker J.R."/>
            <person name="Palm C.J."/>
            <person name="Federspiel N.A."/>
            <person name="Kaul S."/>
            <person name="White O."/>
            <person name="Alonso J."/>
            <person name="Altafi H."/>
            <person name="Araujo R."/>
            <person name="Bowman C.L."/>
            <person name="Brooks S.Y."/>
            <person name="Buehler E."/>
            <person name="Chan A."/>
            <person name="Chao Q."/>
            <person name="Chen H."/>
            <person name="Cheuk R.F."/>
            <person name="Chin C.W."/>
            <person name="Chung M.K."/>
            <person name="Conn L."/>
            <person name="Conway A.B."/>
            <person name="Conway A.R."/>
            <person name="Creasy T.H."/>
            <person name="Dewar K."/>
            <person name="Dunn P."/>
            <person name="Etgu P."/>
            <person name="Feldblyum T.V."/>
            <person name="Feng J.-D."/>
            <person name="Fong B."/>
            <person name="Fujii C.Y."/>
            <person name="Gill J.E."/>
            <person name="Goldsmith A.D."/>
            <person name="Haas B."/>
            <person name="Hansen N.F."/>
            <person name="Hughes B."/>
            <person name="Huizar L."/>
            <person name="Hunter J.L."/>
            <person name="Jenkins J."/>
            <person name="Johnson-Hopson C."/>
            <person name="Khan S."/>
            <person name="Khaykin E."/>
            <person name="Kim C.J."/>
            <person name="Koo H.L."/>
            <person name="Kremenetskaia I."/>
            <person name="Kurtz D.B."/>
            <person name="Kwan A."/>
            <person name="Lam B."/>
            <person name="Langin-Hooper S."/>
            <person name="Lee A."/>
            <person name="Lee J.M."/>
            <person name="Lenz C.A."/>
            <person name="Li J.H."/>
            <person name="Li Y.-P."/>
            <person name="Lin X."/>
            <person name="Liu S.X."/>
            <person name="Liu Z.A."/>
            <person name="Luros J.S."/>
            <person name="Maiti R."/>
            <person name="Marziali A."/>
            <person name="Militscher J."/>
            <person name="Miranda M."/>
            <person name="Nguyen M."/>
            <person name="Nierman W.C."/>
            <person name="Osborne B.I."/>
            <person name="Pai G."/>
            <person name="Peterson J."/>
            <person name="Pham P.K."/>
            <person name="Rizzo M."/>
            <person name="Rooney T."/>
            <person name="Rowley D."/>
            <person name="Sakano H."/>
            <person name="Salzberg S.L."/>
            <person name="Schwartz J.R."/>
            <person name="Shinn P."/>
            <person name="Southwick A.M."/>
            <person name="Sun H."/>
            <person name="Tallon L.J."/>
            <person name="Tambunga G."/>
            <person name="Toriumi M.J."/>
            <person name="Town C.D."/>
            <person name="Utterback T."/>
            <person name="Van Aken S."/>
            <person name="Vaysberg M."/>
            <person name="Vysotskaia V.S."/>
            <person name="Walker M."/>
            <person name="Wu D."/>
            <person name="Yu G."/>
            <person name="Fraser C.M."/>
            <person name="Venter J.C."/>
            <person name="Davis R.W."/>
        </authorList>
    </citation>
    <scope>NUCLEOTIDE SEQUENCE [LARGE SCALE GENOMIC DNA]</scope>
    <source>
        <strain>cv. Columbia</strain>
    </source>
</reference>
<reference key="2">
    <citation type="journal article" date="2017" name="Plant J.">
        <title>Araport11: a complete reannotation of the Arabidopsis thaliana reference genome.</title>
        <authorList>
            <person name="Cheng C.Y."/>
            <person name="Krishnakumar V."/>
            <person name="Chan A.P."/>
            <person name="Thibaud-Nissen F."/>
            <person name="Schobel S."/>
            <person name="Town C.D."/>
        </authorList>
    </citation>
    <scope>GENOME REANNOTATION</scope>
    <source>
        <strain>cv. Columbia</strain>
    </source>
</reference>
<reference key="3">
    <citation type="journal article" date="2005" name="Plant Physiol.">
        <title>An expression and bioinformatics analysis of the Arabidopsis serine carboxypeptidase-like gene family.</title>
        <authorList>
            <person name="Fraser C.M."/>
            <person name="Rider L.W."/>
            <person name="Chapple C."/>
        </authorList>
    </citation>
    <scope>GENE FAMILY</scope>
    <scope>TISSUE SPECIFICITY</scope>
    <scope>NOMENCLATURE</scope>
</reference>
<gene>
    <name type="primary">SCPL5</name>
    <name type="ordered locus">At1g73290</name>
    <name type="ORF">T18K17.4</name>
</gene>
<sequence>MANYISSVLKSLLLLLHLVFLIQQHVDSASIVKFLPGFEGSLPFELETGYIGIGEEEEVQLFYYFIKSERNPKEDPLLLWLSGGPGCSSISGLLFENGPLAMKLDVYNGTLPSLVPTTYSWTKTSSMIFLDQPVGTGFSYSRTQQYNKPSDSGEAKRIHEFLQKWLSKHQEFSSNPFYVAGDSYSGMVVPATVQEISKGNYQCCSPPINLQGYVLGNPITEHAIDYNYRIPFAHGMALISDELYESLKRVCKGEYVDPRDTECLKLVEEFSKCTKGVCQEVVIKPLCVTETPNCYIYRYLLTTYWVNDVNVRKALQINKESIGEWVRCYFGIPYTHDIKSSVPYHMNNSINGYRSLIYSGDHDLNVPFLATQAWVRSLNYSIIDNWRPWMIKDQIGGYTKTYANKMTFATVRGGGHTAEYKPYETYIMFHRWINGQPL</sequence>